<keyword id="KW-0249">Electron transport</keyword>
<keyword id="KW-0349">Heme</keyword>
<keyword id="KW-0408">Iron</keyword>
<keyword id="KW-0472">Membrane</keyword>
<keyword id="KW-0479">Metal-binding</keyword>
<keyword id="KW-0496">Mitochondrion</keyword>
<keyword id="KW-0999">Mitochondrion inner membrane</keyword>
<keyword id="KW-0679">Respiratory chain</keyword>
<keyword id="KW-0812">Transmembrane</keyword>
<keyword id="KW-1133">Transmembrane helix</keyword>
<keyword id="KW-0813">Transport</keyword>
<keyword id="KW-0830">Ubiquinone</keyword>
<reference key="1">
    <citation type="journal article" date="2003" name="Mamm. Biol.">
        <title>Phylogenetic analysis of sigmodontine rodents (Muroidea), with special reference to the akodont genus Deltamys.</title>
        <authorList>
            <person name="D'Elia G."/>
            <person name="Gonzalez E.M."/>
            <person name="Pardinas U.F.J."/>
        </authorList>
    </citation>
    <scope>NUCLEOTIDE SEQUENCE [GENOMIC DNA]</scope>
</reference>
<evidence type="ECO:0000250" key="1"/>
<evidence type="ECO:0000250" key="2">
    <source>
        <dbReference type="UniProtKB" id="P00157"/>
    </source>
</evidence>
<evidence type="ECO:0000255" key="3">
    <source>
        <dbReference type="PROSITE-ProRule" id="PRU00967"/>
    </source>
</evidence>
<evidence type="ECO:0000255" key="4">
    <source>
        <dbReference type="PROSITE-ProRule" id="PRU00968"/>
    </source>
</evidence>
<gene>
    <name type="primary">MT-CYB</name>
    <name type="synonym">COB</name>
    <name type="synonym">CYTB</name>
    <name type="synonym">MTCYB</name>
</gene>
<comment type="function">
    <text evidence="2">Component of the ubiquinol-cytochrome c reductase complex (complex III or cytochrome b-c1 complex) that is part of the mitochondrial respiratory chain. The b-c1 complex mediates electron transfer from ubiquinol to cytochrome c. Contributes to the generation of a proton gradient across the mitochondrial membrane that is then used for ATP synthesis.</text>
</comment>
<comment type="cofactor">
    <cofactor evidence="2">
        <name>heme b</name>
        <dbReference type="ChEBI" id="CHEBI:60344"/>
    </cofactor>
    <text evidence="2">Binds 2 heme b groups non-covalently.</text>
</comment>
<comment type="subunit">
    <text evidence="2">The cytochrome bc1 complex contains 11 subunits: 3 respiratory subunits (MT-CYB, CYC1 and UQCRFS1), 2 core proteins (UQCRC1 and UQCRC2) and 6 low-molecular weight proteins (UQCRH/QCR6, UQCRB/QCR7, UQCRQ/QCR8, UQCR10/QCR9, UQCR11/QCR10 and a cleavage product of UQCRFS1). This cytochrome bc1 complex then forms a dimer.</text>
</comment>
<comment type="subcellular location">
    <subcellularLocation>
        <location evidence="2">Mitochondrion inner membrane</location>
        <topology evidence="2">Multi-pass membrane protein</topology>
    </subcellularLocation>
</comment>
<comment type="miscellaneous">
    <text evidence="1">Heme 1 (or BL or b562) is low-potential and absorbs at about 562 nm, and heme 2 (or BH or b566) is high-potential and absorbs at about 566 nm.</text>
</comment>
<comment type="similarity">
    <text evidence="3 4">Belongs to the cytochrome b family.</text>
</comment>
<comment type="caution">
    <text evidence="2">The full-length protein contains only eight transmembrane helices, not nine as predicted by bioinformatics tools.</text>
</comment>
<geneLocation type="mitochondrion"/>
<accession>Q6XZP4</accession>
<sequence length="379" mass="42601">MKILRKTHPLLKIVNHSFIDLPTPSNISSWWNFGSLLGMCLVIQILTGLFLAMHYTSDTATAFSSVAHICRDVNYGWLIRYLHANGASMFFICLFIHVGRGIYYGSYVLSETWNIGIILLLTTMATAFVGYVLPWGQMSFWGATVITNLLSAIPYIGNTLVEWIWGGFSVDKATLTRFFAFHFILPFIITALVLVHLLFLHETGSNNPSGLNSDSDKIPFHPYYTIKDLLGIFLLLMTLMILALFFPDILGDPDNFTPANPLNTPAHIKPEWYFLFAYAILRSIPNKLGGVLALVLSILILATFPLLNTSKQHGLIFRPITQTIYWIFIANLLVLTWIGGQPVEYPFTTIGQIASITYFTIIVIIMPVSNTIENNIIKL</sequence>
<feature type="chain" id="PRO_0000255033" description="Cytochrome b">
    <location>
        <begin position="1"/>
        <end position="379"/>
    </location>
</feature>
<feature type="transmembrane region" description="Helical" evidence="2">
    <location>
        <begin position="33"/>
        <end position="53"/>
    </location>
</feature>
<feature type="transmembrane region" description="Helical" evidence="2">
    <location>
        <begin position="77"/>
        <end position="98"/>
    </location>
</feature>
<feature type="transmembrane region" description="Helical" evidence="2">
    <location>
        <begin position="113"/>
        <end position="133"/>
    </location>
</feature>
<feature type="transmembrane region" description="Helical" evidence="2">
    <location>
        <begin position="178"/>
        <end position="198"/>
    </location>
</feature>
<feature type="transmembrane region" description="Helical" evidence="2">
    <location>
        <begin position="226"/>
        <end position="246"/>
    </location>
</feature>
<feature type="transmembrane region" description="Helical" evidence="2">
    <location>
        <begin position="288"/>
        <end position="308"/>
    </location>
</feature>
<feature type="transmembrane region" description="Helical" evidence="2">
    <location>
        <begin position="320"/>
        <end position="340"/>
    </location>
</feature>
<feature type="transmembrane region" description="Helical" evidence="2">
    <location>
        <begin position="347"/>
        <end position="367"/>
    </location>
</feature>
<feature type="binding site" description="axial binding residue" evidence="2">
    <location>
        <position position="83"/>
    </location>
    <ligand>
        <name>heme b</name>
        <dbReference type="ChEBI" id="CHEBI:60344"/>
        <label>b562</label>
    </ligand>
    <ligandPart>
        <name>Fe</name>
        <dbReference type="ChEBI" id="CHEBI:18248"/>
    </ligandPart>
</feature>
<feature type="binding site" description="axial binding residue" evidence="2">
    <location>
        <position position="97"/>
    </location>
    <ligand>
        <name>heme b</name>
        <dbReference type="ChEBI" id="CHEBI:60344"/>
        <label>b566</label>
    </ligand>
    <ligandPart>
        <name>Fe</name>
        <dbReference type="ChEBI" id="CHEBI:18248"/>
    </ligandPart>
</feature>
<feature type="binding site" description="axial binding residue" evidence="2">
    <location>
        <position position="182"/>
    </location>
    <ligand>
        <name>heme b</name>
        <dbReference type="ChEBI" id="CHEBI:60344"/>
        <label>b562</label>
    </ligand>
    <ligandPart>
        <name>Fe</name>
        <dbReference type="ChEBI" id="CHEBI:18248"/>
    </ligandPart>
</feature>
<feature type="binding site" description="axial binding residue" evidence="2">
    <location>
        <position position="196"/>
    </location>
    <ligand>
        <name>heme b</name>
        <dbReference type="ChEBI" id="CHEBI:60344"/>
        <label>b566</label>
    </ligand>
    <ligandPart>
        <name>Fe</name>
        <dbReference type="ChEBI" id="CHEBI:18248"/>
    </ligandPart>
</feature>
<feature type="binding site" evidence="2">
    <location>
        <position position="201"/>
    </location>
    <ligand>
        <name>a ubiquinone</name>
        <dbReference type="ChEBI" id="CHEBI:16389"/>
    </ligand>
</feature>
<dbReference type="EMBL" id="AY195860">
    <property type="protein sequence ID" value="AAP34289.1"/>
    <property type="molecule type" value="Genomic_DNA"/>
</dbReference>
<dbReference type="SMR" id="Q6XZP4"/>
<dbReference type="GO" id="GO:0005743">
    <property type="term" value="C:mitochondrial inner membrane"/>
    <property type="evidence" value="ECO:0007669"/>
    <property type="project" value="UniProtKB-SubCell"/>
</dbReference>
<dbReference type="GO" id="GO:0045275">
    <property type="term" value="C:respiratory chain complex III"/>
    <property type="evidence" value="ECO:0007669"/>
    <property type="project" value="InterPro"/>
</dbReference>
<dbReference type="GO" id="GO:0046872">
    <property type="term" value="F:metal ion binding"/>
    <property type="evidence" value="ECO:0007669"/>
    <property type="project" value="UniProtKB-KW"/>
</dbReference>
<dbReference type="GO" id="GO:0008121">
    <property type="term" value="F:ubiquinol-cytochrome-c reductase activity"/>
    <property type="evidence" value="ECO:0007669"/>
    <property type="project" value="InterPro"/>
</dbReference>
<dbReference type="GO" id="GO:0006122">
    <property type="term" value="P:mitochondrial electron transport, ubiquinol to cytochrome c"/>
    <property type="evidence" value="ECO:0007669"/>
    <property type="project" value="TreeGrafter"/>
</dbReference>
<dbReference type="CDD" id="cd00290">
    <property type="entry name" value="cytochrome_b_C"/>
    <property type="match status" value="1"/>
</dbReference>
<dbReference type="CDD" id="cd00284">
    <property type="entry name" value="Cytochrome_b_N"/>
    <property type="match status" value="1"/>
</dbReference>
<dbReference type="FunFam" id="1.20.810.10:FF:000002">
    <property type="entry name" value="Cytochrome b"/>
    <property type="match status" value="1"/>
</dbReference>
<dbReference type="Gene3D" id="1.20.810.10">
    <property type="entry name" value="Cytochrome Bc1 Complex, Chain C"/>
    <property type="match status" value="1"/>
</dbReference>
<dbReference type="InterPro" id="IPR005798">
    <property type="entry name" value="Cyt_b/b6_C"/>
</dbReference>
<dbReference type="InterPro" id="IPR036150">
    <property type="entry name" value="Cyt_b/b6_C_sf"/>
</dbReference>
<dbReference type="InterPro" id="IPR005797">
    <property type="entry name" value="Cyt_b/b6_N"/>
</dbReference>
<dbReference type="InterPro" id="IPR027387">
    <property type="entry name" value="Cytb/b6-like_sf"/>
</dbReference>
<dbReference type="InterPro" id="IPR030689">
    <property type="entry name" value="Cytochrome_b"/>
</dbReference>
<dbReference type="InterPro" id="IPR048260">
    <property type="entry name" value="Cytochrome_b_C_euk/bac"/>
</dbReference>
<dbReference type="InterPro" id="IPR048259">
    <property type="entry name" value="Cytochrome_b_N_euk/bac"/>
</dbReference>
<dbReference type="InterPro" id="IPR016174">
    <property type="entry name" value="Di-haem_cyt_TM"/>
</dbReference>
<dbReference type="PANTHER" id="PTHR19271">
    <property type="entry name" value="CYTOCHROME B"/>
    <property type="match status" value="1"/>
</dbReference>
<dbReference type="PANTHER" id="PTHR19271:SF16">
    <property type="entry name" value="CYTOCHROME B"/>
    <property type="match status" value="1"/>
</dbReference>
<dbReference type="Pfam" id="PF00032">
    <property type="entry name" value="Cytochrom_B_C"/>
    <property type="match status" value="1"/>
</dbReference>
<dbReference type="Pfam" id="PF00033">
    <property type="entry name" value="Cytochrome_B"/>
    <property type="match status" value="1"/>
</dbReference>
<dbReference type="PIRSF" id="PIRSF038885">
    <property type="entry name" value="COB"/>
    <property type="match status" value="1"/>
</dbReference>
<dbReference type="SUPFAM" id="SSF81648">
    <property type="entry name" value="a domain/subunit of cytochrome bc1 complex (Ubiquinol-cytochrome c reductase)"/>
    <property type="match status" value="1"/>
</dbReference>
<dbReference type="SUPFAM" id="SSF81342">
    <property type="entry name" value="Transmembrane di-heme cytochromes"/>
    <property type="match status" value="1"/>
</dbReference>
<dbReference type="PROSITE" id="PS51003">
    <property type="entry name" value="CYTB_CTER"/>
    <property type="match status" value="1"/>
</dbReference>
<dbReference type="PROSITE" id="PS51002">
    <property type="entry name" value="CYTB_NTER"/>
    <property type="match status" value="1"/>
</dbReference>
<protein>
    <recommendedName>
        <fullName>Cytochrome b</fullName>
    </recommendedName>
    <alternativeName>
        <fullName>Complex III subunit 3</fullName>
    </alternativeName>
    <alternativeName>
        <fullName>Complex III subunit III</fullName>
    </alternativeName>
    <alternativeName>
        <fullName>Cytochrome b-c1 complex subunit 3</fullName>
    </alternativeName>
    <alternativeName>
        <fullName>Ubiquinol-cytochrome-c reductase complex cytochrome b subunit</fullName>
    </alternativeName>
</protein>
<organism>
    <name type="scientific">Deltamys kempi</name>
    <name type="common">Kemp's grass mouse</name>
    <dbReference type="NCBI Taxonomy" id="230084"/>
    <lineage>
        <taxon>Eukaryota</taxon>
        <taxon>Metazoa</taxon>
        <taxon>Chordata</taxon>
        <taxon>Craniata</taxon>
        <taxon>Vertebrata</taxon>
        <taxon>Euteleostomi</taxon>
        <taxon>Mammalia</taxon>
        <taxon>Eutheria</taxon>
        <taxon>Euarchontoglires</taxon>
        <taxon>Glires</taxon>
        <taxon>Rodentia</taxon>
        <taxon>Myomorpha</taxon>
        <taxon>Muroidea</taxon>
        <taxon>Cricetidae</taxon>
        <taxon>Sigmodontinae</taxon>
        <taxon>Deltamys</taxon>
    </lineage>
</organism>
<name>CYB_DELKE</name>
<proteinExistence type="inferred from homology"/>